<comment type="function">
    <text evidence="2">Transfers sialic acid from the donor of substrate CMP-sialic acid to galactose containing acceptor substrates. Has alpha-2,6-sialyltransferase activity toward oligosaccharides that have the Gal-beta-1,4-GlcNAc sequence at the non-reducing end of their carbohydrate groups, but it has weak or no activities toward glycoproteins and glycolipids.</text>
</comment>
<comment type="catalytic activity">
    <reaction evidence="2">
        <text>a beta-D-galactoside + CMP-N-acetyl-beta-neuraminate = an N-acetyl-alpha-neuraminyl-(2-&gt;6)-beta-D-galactosyl derivative + CMP + H(+)</text>
        <dbReference type="Rhea" id="RHEA:52104"/>
        <dbReference type="ChEBI" id="CHEBI:15378"/>
        <dbReference type="ChEBI" id="CHEBI:28034"/>
        <dbReference type="ChEBI" id="CHEBI:57812"/>
        <dbReference type="ChEBI" id="CHEBI:60377"/>
        <dbReference type="ChEBI" id="CHEBI:136398"/>
        <dbReference type="EC" id="2.4.3.1"/>
    </reaction>
</comment>
<comment type="subcellular location">
    <subcellularLocation>
        <location evidence="1">Golgi apparatus</location>
        <location evidence="1">Golgi stack membrane</location>
        <topology evidence="1">Single-pass type II membrane protein</topology>
    </subcellularLocation>
</comment>
<comment type="similarity">
    <text evidence="5">Belongs to the glycosyltransferase 29 family.</text>
</comment>
<evidence type="ECO:0000250" key="1"/>
<evidence type="ECO:0000250" key="2">
    <source>
        <dbReference type="UniProtKB" id="Q96JF0"/>
    </source>
</evidence>
<evidence type="ECO:0000255" key="3"/>
<evidence type="ECO:0000256" key="4">
    <source>
        <dbReference type="SAM" id="MobiDB-lite"/>
    </source>
</evidence>
<evidence type="ECO:0000305" key="5"/>
<gene>
    <name type="primary">St6gal2</name>
</gene>
<proteinExistence type="evidence at transcript level"/>
<feature type="chain" id="PRO_0000314788" description="Beta-galactoside alpha-2,6-sialyltransferase 2">
    <location>
        <begin position="1"/>
        <end position="525"/>
    </location>
</feature>
<feature type="topological domain" description="Cytoplasmic" evidence="3">
    <location>
        <begin position="1"/>
        <end position="11"/>
    </location>
</feature>
<feature type="transmembrane region" description="Helical; Signal-anchor for type II membrane protein" evidence="3">
    <location>
        <begin position="12"/>
        <end position="32"/>
    </location>
</feature>
<feature type="topological domain" description="Lumenal" evidence="3">
    <location>
        <begin position="33"/>
        <end position="525"/>
    </location>
</feature>
<feature type="region of interest" description="Disordered" evidence="4">
    <location>
        <begin position="85"/>
        <end position="107"/>
    </location>
</feature>
<feature type="region of interest" description="Disordered" evidence="4">
    <location>
        <begin position="145"/>
        <end position="183"/>
    </location>
</feature>
<feature type="glycosylation site" description="N-linked (GlcNAc...) asparagine" evidence="3">
    <location>
        <position position="303"/>
    </location>
</feature>
<feature type="glycosylation site" description="N-linked (GlcNAc...) asparagine" evidence="3">
    <location>
        <position position="333"/>
    </location>
</feature>
<feature type="glycosylation site" description="N-linked (GlcNAc...) asparagine" evidence="3">
    <location>
        <position position="521"/>
    </location>
</feature>
<feature type="disulfide bond" evidence="1">
    <location>
        <begin position="249"/>
        <end position="515"/>
    </location>
</feature>
<feature type="disulfide bond" evidence="1">
    <location>
        <begin position="292"/>
        <end position="444"/>
    </location>
</feature>
<feature type="disulfide bond" evidence="1">
    <location>
        <begin position="462"/>
        <end position="473"/>
    </location>
</feature>
<dbReference type="EC" id="2.4.3.1" evidence="2"/>
<dbReference type="EMBL" id="AJ627626">
    <property type="protein sequence ID" value="CAF29494.1"/>
    <property type="molecule type" value="mRNA"/>
</dbReference>
<dbReference type="RefSeq" id="NP_001094358.1">
    <property type="nucleotide sequence ID" value="NM_001100888.1"/>
</dbReference>
<dbReference type="RefSeq" id="XP_006244322.1">
    <property type="nucleotide sequence ID" value="XM_006244260.5"/>
</dbReference>
<dbReference type="RefSeq" id="XP_006244326.1">
    <property type="nucleotide sequence ID" value="XM_006244264.5"/>
</dbReference>
<dbReference type="RefSeq" id="XP_006244327.1">
    <property type="nucleotide sequence ID" value="XM_006244265.3"/>
</dbReference>
<dbReference type="RefSeq" id="XP_008764978.1">
    <property type="nucleotide sequence ID" value="XM_008766756.2"/>
</dbReference>
<dbReference type="RefSeq" id="XP_008764979.1">
    <property type="nucleotide sequence ID" value="XM_008766757.2"/>
</dbReference>
<dbReference type="RefSeq" id="XP_017451813.1">
    <property type="nucleotide sequence ID" value="XM_017596324.1"/>
</dbReference>
<dbReference type="RefSeq" id="XP_038939078.1">
    <property type="nucleotide sequence ID" value="XM_039083150.2"/>
</dbReference>
<dbReference type="RefSeq" id="XP_063122902.1">
    <property type="nucleotide sequence ID" value="XM_063266832.1"/>
</dbReference>
<dbReference type="SMR" id="Q701R3"/>
<dbReference type="FunCoup" id="Q701R3">
    <property type="interactions" value="558"/>
</dbReference>
<dbReference type="STRING" id="10116.ENSRNOP00000071786"/>
<dbReference type="CAZy" id="GT29">
    <property type="family name" value="Glycosyltransferase Family 29"/>
</dbReference>
<dbReference type="GlyCosmos" id="Q701R3">
    <property type="glycosylation" value="3 sites, No reported glycans"/>
</dbReference>
<dbReference type="GlyGen" id="Q701R3">
    <property type="glycosylation" value="3 sites"/>
</dbReference>
<dbReference type="iPTMnet" id="Q701R3"/>
<dbReference type="PhosphoSitePlus" id="Q701R3"/>
<dbReference type="PaxDb" id="10116-ENSRNOP00000067395"/>
<dbReference type="Ensembl" id="ENSRNOT00000072796.3">
    <property type="protein sequence ID" value="ENSRNOP00000067395.1"/>
    <property type="gene ID" value="ENSRNOG00000046515.3"/>
</dbReference>
<dbReference type="GeneID" id="301155"/>
<dbReference type="KEGG" id="rno:301155"/>
<dbReference type="AGR" id="RGD:1559663"/>
<dbReference type="CTD" id="84620"/>
<dbReference type="RGD" id="1559663">
    <property type="gene designation" value="St6gal2"/>
</dbReference>
<dbReference type="eggNOG" id="KOG2692">
    <property type="taxonomic scope" value="Eukaryota"/>
</dbReference>
<dbReference type="GeneTree" id="ENSGT00940000158714"/>
<dbReference type="HOGENOM" id="CLU_038334_1_0_1"/>
<dbReference type="InParanoid" id="Q701R3"/>
<dbReference type="OMA" id="IMGAMHE"/>
<dbReference type="PhylomeDB" id="Q701R3"/>
<dbReference type="BRENDA" id="2.4.99.1">
    <property type="organism ID" value="5301"/>
</dbReference>
<dbReference type="Reactome" id="R-RNO-4085001">
    <property type="pathway name" value="Sialic acid metabolism"/>
</dbReference>
<dbReference type="PRO" id="PR:Q701R3"/>
<dbReference type="Proteomes" id="UP000002494">
    <property type="component" value="Chromosome 9"/>
</dbReference>
<dbReference type="Bgee" id="ENSRNOG00000046515">
    <property type="expression patterns" value="Expressed in frontal cortex"/>
</dbReference>
<dbReference type="GO" id="GO:0005794">
    <property type="term" value="C:Golgi apparatus"/>
    <property type="evidence" value="ECO:0000318"/>
    <property type="project" value="GO_Central"/>
</dbReference>
<dbReference type="GO" id="GO:0032580">
    <property type="term" value="C:Golgi cisterna membrane"/>
    <property type="evidence" value="ECO:0007669"/>
    <property type="project" value="UniProtKB-SubCell"/>
</dbReference>
<dbReference type="GO" id="GO:0003835">
    <property type="term" value="F:beta-galactoside alpha-2,6-sialyltransferase activity"/>
    <property type="evidence" value="ECO:0000250"/>
    <property type="project" value="UniProtKB"/>
</dbReference>
<dbReference type="GO" id="GO:0008373">
    <property type="term" value="F:sialyltransferase activity"/>
    <property type="evidence" value="ECO:0000266"/>
    <property type="project" value="RGD"/>
</dbReference>
<dbReference type="GO" id="GO:0009311">
    <property type="term" value="P:oligosaccharide metabolic process"/>
    <property type="evidence" value="ECO:0000250"/>
    <property type="project" value="UniProtKB"/>
</dbReference>
<dbReference type="GO" id="GO:0006486">
    <property type="term" value="P:protein glycosylation"/>
    <property type="evidence" value="ECO:0007669"/>
    <property type="project" value="InterPro"/>
</dbReference>
<dbReference type="GO" id="GO:0097503">
    <property type="term" value="P:sialylation"/>
    <property type="evidence" value="ECO:0000318"/>
    <property type="project" value="GO_Central"/>
</dbReference>
<dbReference type="CDD" id="cd23986">
    <property type="entry name" value="GT29_ST6GAL2"/>
    <property type="match status" value="1"/>
</dbReference>
<dbReference type="FunFam" id="3.90.1480.20:FF:000010">
    <property type="entry name" value="ST6 beta-galactoside alpha-2,6-sialyltransferase 2"/>
    <property type="match status" value="1"/>
</dbReference>
<dbReference type="Gene3D" id="3.90.1480.20">
    <property type="entry name" value="Glycosyl transferase family 29"/>
    <property type="match status" value="1"/>
</dbReference>
<dbReference type="InterPro" id="IPR011330">
    <property type="entry name" value="Glyco_hydro/deAcase_b/a-brl"/>
</dbReference>
<dbReference type="InterPro" id="IPR001675">
    <property type="entry name" value="Glyco_trans_29"/>
</dbReference>
<dbReference type="InterPro" id="IPR038578">
    <property type="entry name" value="GT29-like_sf"/>
</dbReference>
<dbReference type="PANTHER" id="PTHR46059">
    <property type="entry name" value="BETA-GALACTOSIDE ALPHA-2,6-SIALYLTRANSFERASE"/>
    <property type="match status" value="1"/>
</dbReference>
<dbReference type="PANTHER" id="PTHR46059:SF3">
    <property type="entry name" value="BETA-GALACTOSIDE ALPHA-2,6-SIALYLTRANSFERASE 2"/>
    <property type="match status" value="1"/>
</dbReference>
<dbReference type="Pfam" id="PF00777">
    <property type="entry name" value="Glyco_transf_29"/>
    <property type="match status" value="1"/>
</dbReference>
<dbReference type="SUPFAM" id="SSF88713">
    <property type="entry name" value="Glycoside hydrolase/deacetylase"/>
    <property type="match status" value="1"/>
</dbReference>
<protein>
    <recommendedName>
        <fullName>Beta-galactoside alpha-2,6-sialyltransferase 2</fullName>
        <shortName>Alpha 2,6-ST 2</shortName>
        <ecNumber evidence="2">2.4.3.1</ecNumber>
    </recommendedName>
    <alternativeName>
        <fullName>CMP-N-acetylneuraminate-beta-galactosamide-alpha-2,6-sialyltransferase 2</fullName>
    </alternativeName>
    <alternativeName>
        <fullName>ST6Gal II</fullName>
        <shortName>ST6GalII</shortName>
    </alternativeName>
    <alternativeName>
        <fullName>Sialyltransferase 2</fullName>
    </alternativeName>
</protein>
<keyword id="KW-1015">Disulfide bond</keyword>
<keyword id="KW-0325">Glycoprotein</keyword>
<keyword id="KW-0328">Glycosyltransferase</keyword>
<keyword id="KW-0333">Golgi apparatus</keyword>
<keyword id="KW-0472">Membrane</keyword>
<keyword id="KW-1185">Reference proteome</keyword>
<keyword id="KW-0735">Signal-anchor</keyword>
<keyword id="KW-0808">Transferase</keyword>
<keyword id="KW-0812">Transmembrane</keyword>
<keyword id="KW-1133">Transmembrane helix</keyword>
<organism>
    <name type="scientific">Rattus norvegicus</name>
    <name type="common">Rat</name>
    <dbReference type="NCBI Taxonomy" id="10116"/>
    <lineage>
        <taxon>Eukaryota</taxon>
        <taxon>Metazoa</taxon>
        <taxon>Chordata</taxon>
        <taxon>Craniata</taxon>
        <taxon>Vertebrata</taxon>
        <taxon>Euteleostomi</taxon>
        <taxon>Mammalia</taxon>
        <taxon>Eutheria</taxon>
        <taxon>Euarchontoglires</taxon>
        <taxon>Glires</taxon>
        <taxon>Rodentia</taxon>
        <taxon>Myomorpha</taxon>
        <taxon>Muroidea</taxon>
        <taxon>Muridae</taxon>
        <taxon>Murinae</taxon>
        <taxon>Rattus</taxon>
    </lineage>
</organism>
<name>SIAT2_RAT</name>
<accession>Q701R3</accession>
<sequence>MKPHLKQWRQRMLFAIFVWGLLFLAIFIYFTNSNPAAPMPSSFSFLESRGLLPVQGKQRVIMGALQEPSLPRSLEPSKVLMDGHSASPFNSWPGDPQKGDQAQDGFDNGDEFFTSQVGRKSQSAFYPEEDNYFFVAGQPGLYHHRQGALGLPSPGESSWQSGPGQPKQEKLRHPRRGSLPEEAYDSDMLSTSMSRAFLYRLWKGTVSSKMLNPRLQKAMRYYMSFNKHGVRFSRRGRREARRTGPELLCEMRKRVRVRTLDGKEAPFSGLGWRPLVPGVPLSQLHPRGLRSCAVVMSAGAILNSSLGEEIDSHDAVLRFNSAPTRGYEKDVGNKTTVRIINSQILANPSHHFIDSSLYKDVILVAWDPAPYSANLNLWYKKPDYNLFTPYIQHRLKYPTQPFYILHPKFIWQLWDIIQENTREKIQPNPPSSGFIGILVMMSMCQEVHVYEYIPSVRQTELCHYHELYYDAACTLGAYHPLLYEKLLVQRLNTGTQADLHHKGKVVLPGFQTLRCPVTRPNNTNT</sequence>
<reference key="1">
    <citation type="journal article" date="2005" name="Glycobiology">
        <title>The animal sialyltransferases and sialyltransferase-related genes: a phylogenetic approach.</title>
        <authorList>
            <person name="Harduin-Lepers A."/>
            <person name="Mollicone R."/>
            <person name="Delannoy P."/>
            <person name="Oriol R."/>
        </authorList>
    </citation>
    <scope>NUCLEOTIDE SEQUENCE [MRNA]</scope>
    <source>
        <strain>Wistar</strain>
    </source>
</reference>